<feature type="chain" id="PRO_0000346612" description="Urease accessory protein UreD">
    <location>
        <begin position="1"/>
        <end position="279"/>
    </location>
</feature>
<organism>
    <name type="scientific">Trichodesmium erythraeum (strain IMS101)</name>
    <dbReference type="NCBI Taxonomy" id="203124"/>
    <lineage>
        <taxon>Bacteria</taxon>
        <taxon>Bacillati</taxon>
        <taxon>Cyanobacteriota</taxon>
        <taxon>Cyanophyceae</taxon>
        <taxon>Oscillatoriophycideae</taxon>
        <taxon>Oscillatoriales</taxon>
        <taxon>Microcoleaceae</taxon>
        <taxon>Trichodesmium</taxon>
    </lineage>
</organism>
<comment type="function">
    <text evidence="1">Required for maturation of urease via the functional incorporation of the urease nickel metallocenter.</text>
</comment>
<comment type="subunit">
    <text evidence="1">UreD, UreF and UreG form a complex that acts as a GTP-hydrolysis-dependent molecular chaperone, activating the urease apoprotein by helping to assemble the nickel containing metallocenter of UreC. The UreE protein probably delivers the nickel.</text>
</comment>
<comment type="subcellular location">
    <subcellularLocation>
        <location evidence="1">Cytoplasm</location>
    </subcellularLocation>
</comment>
<comment type="similarity">
    <text evidence="1">Belongs to the UreD family.</text>
</comment>
<proteinExistence type="inferred from homology"/>
<protein>
    <recommendedName>
        <fullName evidence="1">Urease accessory protein UreD</fullName>
    </recommendedName>
</protein>
<keyword id="KW-0143">Chaperone</keyword>
<keyword id="KW-0963">Cytoplasm</keyword>
<keyword id="KW-0996">Nickel insertion</keyword>
<gene>
    <name evidence="1" type="primary">ureD</name>
    <name type="ordered locus">Tery_0749</name>
</gene>
<sequence>MSTNNLDIKLNCNSSGQTIVTHQYTTHPLRLSGVFRLDTTDPRTAYLYLINTSPGLLAGDNLSLSLQLEKGTSVYLTDQAAIKVHAMPMTTTKANTNIKIKVEAGARLELVAEPIILFADAALEQTTYIQLHSRAELFWSEIILPGRLARGEWYEFRYYLSQLEITSMTEEICFRDAIHLEGKQNIFKHRDLFAAKPVLANLIVVQPHSDLEVLSQKLENLEAANCPDLLLGSSILPNNKGLLLRALASKTPQIKKYIKYALNCVRNLTNRSSLPYISK</sequence>
<dbReference type="EMBL" id="CP000393">
    <property type="protein sequence ID" value="ABG50178.1"/>
    <property type="molecule type" value="Genomic_DNA"/>
</dbReference>
<dbReference type="RefSeq" id="WP_011610571.1">
    <property type="nucleotide sequence ID" value="NC_008312.1"/>
</dbReference>
<dbReference type="SMR" id="Q117Z6"/>
<dbReference type="STRING" id="203124.Tery_0749"/>
<dbReference type="KEGG" id="ter:Tery_0749"/>
<dbReference type="eggNOG" id="COG0829">
    <property type="taxonomic scope" value="Bacteria"/>
</dbReference>
<dbReference type="HOGENOM" id="CLU_056339_1_1_3"/>
<dbReference type="OrthoDB" id="9798842at2"/>
<dbReference type="GO" id="GO:0005737">
    <property type="term" value="C:cytoplasm"/>
    <property type="evidence" value="ECO:0007669"/>
    <property type="project" value="UniProtKB-SubCell"/>
</dbReference>
<dbReference type="GO" id="GO:0016151">
    <property type="term" value="F:nickel cation binding"/>
    <property type="evidence" value="ECO:0007669"/>
    <property type="project" value="UniProtKB-UniRule"/>
</dbReference>
<dbReference type="HAMAP" id="MF_01384">
    <property type="entry name" value="UreD"/>
    <property type="match status" value="1"/>
</dbReference>
<dbReference type="InterPro" id="IPR002669">
    <property type="entry name" value="UreD"/>
</dbReference>
<dbReference type="PANTHER" id="PTHR33643">
    <property type="entry name" value="UREASE ACCESSORY PROTEIN D"/>
    <property type="match status" value="1"/>
</dbReference>
<dbReference type="PANTHER" id="PTHR33643:SF1">
    <property type="entry name" value="UREASE ACCESSORY PROTEIN D"/>
    <property type="match status" value="1"/>
</dbReference>
<dbReference type="Pfam" id="PF01774">
    <property type="entry name" value="UreD"/>
    <property type="match status" value="1"/>
</dbReference>
<name>URED_TRIEI</name>
<reference key="1">
    <citation type="journal article" date="2015" name="Proc. Natl. Acad. Sci. U.S.A.">
        <title>Trichodesmium genome maintains abundant, widespread noncoding DNA in situ, despite oligotrophic lifestyle.</title>
        <authorList>
            <person name="Walworth N."/>
            <person name="Pfreundt U."/>
            <person name="Nelson W.C."/>
            <person name="Mincer T."/>
            <person name="Heidelberg J.F."/>
            <person name="Fu F."/>
            <person name="Waterbury J.B."/>
            <person name="Glavina del Rio T."/>
            <person name="Goodwin L."/>
            <person name="Kyrpides N.C."/>
            <person name="Land M.L."/>
            <person name="Woyke T."/>
            <person name="Hutchins D.A."/>
            <person name="Hess W.R."/>
            <person name="Webb E.A."/>
        </authorList>
    </citation>
    <scope>NUCLEOTIDE SEQUENCE [LARGE SCALE GENOMIC DNA]</scope>
    <source>
        <strain>IMS101</strain>
    </source>
</reference>
<accession>Q117Z6</accession>
<evidence type="ECO:0000255" key="1">
    <source>
        <dbReference type="HAMAP-Rule" id="MF_01384"/>
    </source>
</evidence>